<sequence>MTYHIDIQNATGKLLPLSEDEITKLASLALRDHKQDAELTVRLVDVEEMTYLNHTYRKKNKPTNVLAFPCSLPANIELECPLLGDVVICPEVLLAESAQFNKSLHAHWSLILIHGVLHLLGYDHIKDEEASIMQMLEAKLLAELGYANPYEVEENELE</sequence>
<proteinExistence type="inferred from homology"/>
<protein>
    <recommendedName>
        <fullName evidence="1">Endoribonuclease YbeY</fullName>
        <ecNumber evidence="1">3.1.-.-</ecNumber>
    </recommendedName>
</protein>
<feature type="chain" id="PRO_0000102473" description="Endoribonuclease YbeY">
    <location>
        <begin position="1"/>
        <end position="158"/>
    </location>
</feature>
<feature type="binding site" evidence="1">
    <location>
        <position position="114"/>
    </location>
    <ligand>
        <name>Zn(2+)</name>
        <dbReference type="ChEBI" id="CHEBI:29105"/>
        <note>catalytic</note>
    </ligand>
</feature>
<feature type="binding site" evidence="1">
    <location>
        <position position="118"/>
    </location>
    <ligand>
        <name>Zn(2+)</name>
        <dbReference type="ChEBI" id="CHEBI:29105"/>
        <note>catalytic</note>
    </ligand>
</feature>
<feature type="binding site" evidence="1">
    <location>
        <position position="124"/>
    </location>
    <ligand>
        <name>Zn(2+)</name>
        <dbReference type="ChEBI" id="CHEBI:29105"/>
        <note>catalytic</note>
    </ligand>
</feature>
<dbReference type="EC" id="3.1.-.-" evidence="1"/>
<dbReference type="EMBL" id="CR628336">
    <property type="protein sequence ID" value="CAH12546.1"/>
    <property type="molecule type" value="Genomic_DNA"/>
</dbReference>
<dbReference type="RefSeq" id="WP_010947169.1">
    <property type="nucleotide sequence ID" value="NC_006368.1"/>
</dbReference>
<dbReference type="SMR" id="Q5X5C5"/>
<dbReference type="GeneID" id="57035430"/>
<dbReference type="KEGG" id="lpp:lpp1395"/>
<dbReference type="LegioList" id="lpp1395"/>
<dbReference type="HOGENOM" id="CLU_106710_0_1_6"/>
<dbReference type="GO" id="GO:0005737">
    <property type="term" value="C:cytoplasm"/>
    <property type="evidence" value="ECO:0007669"/>
    <property type="project" value="UniProtKB-SubCell"/>
</dbReference>
<dbReference type="GO" id="GO:0004222">
    <property type="term" value="F:metalloendopeptidase activity"/>
    <property type="evidence" value="ECO:0007669"/>
    <property type="project" value="InterPro"/>
</dbReference>
<dbReference type="GO" id="GO:0004521">
    <property type="term" value="F:RNA endonuclease activity"/>
    <property type="evidence" value="ECO:0007669"/>
    <property type="project" value="UniProtKB-UniRule"/>
</dbReference>
<dbReference type="GO" id="GO:0008270">
    <property type="term" value="F:zinc ion binding"/>
    <property type="evidence" value="ECO:0007669"/>
    <property type="project" value="UniProtKB-UniRule"/>
</dbReference>
<dbReference type="GO" id="GO:0006364">
    <property type="term" value="P:rRNA processing"/>
    <property type="evidence" value="ECO:0007669"/>
    <property type="project" value="UniProtKB-UniRule"/>
</dbReference>
<dbReference type="Gene3D" id="3.40.390.30">
    <property type="entry name" value="Metalloproteases ('zincins'), catalytic domain"/>
    <property type="match status" value="1"/>
</dbReference>
<dbReference type="HAMAP" id="MF_00009">
    <property type="entry name" value="Endoribonucl_YbeY"/>
    <property type="match status" value="1"/>
</dbReference>
<dbReference type="InterPro" id="IPR023091">
    <property type="entry name" value="MetalPrtase_cat_dom_sf_prd"/>
</dbReference>
<dbReference type="InterPro" id="IPR002036">
    <property type="entry name" value="YbeY"/>
</dbReference>
<dbReference type="InterPro" id="IPR020549">
    <property type="entry name" value="YbeY_CS"/>
</dbReference>
<dbReference type="NCBIfam" id="TIGR00043">
    <property type="entry name" value="rRNA maturation RNase YbeY"/>
    <property type="match status" value="1"/>
</dbReference>
<dbReference type="PANTHER" id="PTHR46986">
    <property type="entry name" value="ENDORIBONUCLEASE YBEY, CHLOROPLASTIC"/>
    <property type="match status" value="1"/>
</dbReference>
<dbReference type="PANTHER" id="PTHR46986:SF1">
    <property type="entry name" value="ENDORIBONUCLEASE YBEY, CHLOROPLASTIC"/>
    <property type="match status" value="1"/>
</dbReference>
<dbReference type="Pfam" id="PF02130">
    <property type="entry name" value="YbeY"/>
    <property type="match status" value="1"/>
</dbReference>
<dbReference type="SUPFAM" id="SSF55486">
    <property type="entry name" value="Metalloproteases ('zincins'), catalytic domain"/>
    <property type="match status" value="1"/>
</dbReference>
<dbReference type="PROSITE" id="PS01306">
    <property type="entry name" value="UPF0054"/>
    <property type="match status" value="1"/>
</dbReference>
<evidence type="ECO:0000255" key="1">
    <source>
        <dbReference type="HAMAP-Rule" id="MF_00009"/>
    </source>
</evidence>
<reference key="1">
    <citation type="journal article" date="2004" name="Nat. Genet.">
        <title>Evidence in the Legionella pneumophila genome for exploitation of host cell functions and high genome plasticity.</title>
        <authorList>
            <person name="Cazalet C."/>
            <person name="Rusniok C."/>
            <person name="Brueggemann H."/>
            <person name="Zidane N."/>
            <person name="Magnier A."/>
            <person name="Ma L."/>
            <person name="Tichit M."/>
            <person name="Jarraud S."/>
            <person name="Bouchier C."/>
            <person name="Vandenesch F."/>
            <person name="Kunst F."/>
            <person name="Etienne J."/>
            <person name="Glaser P."/>
            <person name="Buchrieser C."/>
        </authorList>
    </citation>
    <scope>NUCLEOTIDE SEQUENCE [LARGE SCALE GENOMIC DNA]</scope>
    <source>
        <strain>Paris</strain>
    </source>
</reference>
<name>YBEY_LEGPA</name>
<gene>
    <name evidence="1" type="primary">ybeY</name>
    <name type="ordered locus">lpp1395</name>
</gene>
<comment type="function">
    <text evidence="1">Single strand-specific metallo-endoribonuclease involved in late-stage 70S ribosome quality control and in maturation of the 3' terminus of the 16S rRNA.</text>
</comment>
<comment type="cofactor">
    <cofactor evidence="1">
        <name>Zn(2+)</name>
        <dbReference type="ChEBI" id="CHEBI:29105"/>
    </cofactor>
    <text evidence="1">Binds 1 zinc ion.</text>
</comment>
<comment type="subcellular location">
    <subcellularLocation>
        <location evidence="1">Cytoplasm</location>
    </subcellularLocation>
</comment>
<comment type="similarity">
    <text evidence="1">Belongs to the endoribonuclease YbeY family.</text>
</comment>
<keyword id="KW-0963">Cytoplasm</keyword>
<keyword id="KW-0255">Endonuclease</keyword>
<keyword id="KW-0378">Hydrolase</keyword>
<keyword id="KW-0479">Metal-binding</keyword>
<keyword id="KW-0540">Nuclease</keyword>
<keyword id="KW-0690">Ribosome biogenesis</keyword>
<keyword id="KW-0698">rRNA processing</keyword>
<keyword id="KW-0862">Zinc</keyword>
<accession>Q5X5C5</accession>
<organism>
    <name type="scientific">Legionella pneumophila (strain Paris)</name>
    <dbReference type="NCBI Taxonomy" id="297246"/>
    <lineage>
        <taxon>Bacteria</taxon>
        <taxon>Pseudomonadati</taxon>
        <taxon>Pseudomonadota</taxon>
        <taxon>Gammaproteobacteria</taxon>
        <taxon>Legionellales</taxon>
        <taxon>Legionellaceae</taxon>
        <taxon>Legionella</taxon>
    </lineage>
</organism>